<feature type="chain" id="PRO_1000081862" description="Cyanate hydratase">
    <location>
        <begin position="1"/>
        <end position="156"/>
    </location>
</feature>
<feature type="active site" evidence="1">
    <location>
        <position position="96"/>
    </location>
</feature>
<feature type="active site" evidence="1">
    <location>
        <position position="99"/>
    </location>
</feature>
<feature type="active site" evidence="1">
    <location>
        <position position="122"/>
    </location>
</feature>
<name>CYNS_ECOLC</name>
<organism>
    <name type="scientific">Escherichia coli (strain ATCC 8739 / DSM 1576 / NBRC 3972 / NCIMB 8545 / WDCM 00012 / Crooks)</name>
    <dbReference type="NCBI Taxonomy" id="481805"/>
    <lineage>
        <taxon>Bacteria</taxon>
        <taxon>Pseudomonadati</taxon>
        <taxon>Pseudomonadota</taxon>
        <taxon>Gammaproteobacteria</taxon>
        <taxon>Enterobacterales</taxon>
        <taxon>Enterobacteriaceae</taxon>
        <taxon>Escherichia</taxon>
    </lineage>
</organism>
<gene>
    <name evidence="1" type="primary">cynS</name>
    <name type="ordered locus">EcolC_3285</name>
</gene>
<proteinExistence type="inferred from homology"/>
<comment type="function">
    <text evidence="1">Catalyzes the reaction of cyanate with bicarbonate to produce ammonia and carbon dioxide.</text>
</comment>
<comment type="catalytic activity">
    <reaction evidence="1">
        <text>cyanate + hydrogencarbonate + 3 H(+) = NH4(+) + 2 CO2</text>
        <dbReference type="Rhea" id="RHEA:11120"/>
        <dbReference type="ChEBI" id="CHEBI:15378"/>
        <dbReference type="ChEBI" id="CHEBI:16526"/>
        <dbReference type="ChEBI" id="CHEBI:17544"/>
        <dbReference type="ChEBI" id="CHEBI:28938"/>
        <dbReference type="ChEBI" id="CHEBI:29195"/>
        <dbReference type="EC" id="4.2.1.104"/>
    </reaction>
</comment>
<comment type="similarity">
    <text evidence="1">Belongs to the cyanase family.</text>
</comment>
<reference key="1">
    <citation type="submission" date="2008-02" db="EMBL/GenBank/DDBJ databases">
        <title>Complete sequence of Escherichia coli C str. ATCC 8739.</title>
        <authorList>
            <person name="Copeland A."/>
            <person name="Lucas S."/>
            <person name="Lapidus A."/>
            <person name="Glavina del Rio T."/>
            <person name="Dalin E."/>
            <person name="Tice H."/>
            <person name="Bruce D."/>
            <person name="Goodwin L."/>
            <person name="Pitluck S."/>
            <person name="Kiss H."/>
            <person name="Brettin T."/>
            <person name="Detter J.C."/>
            <person name="Han C."/>
            <person name="Kuske C.R."/>
            <person name="Schmutz J."/>
            <person name="Larimer F."/>
            <person name="Land M."/>
            <person name="Hauser L."/>
            <person name="Kyrpides N."/>
            <person name="Mikhailova N."/>
            <person name="Ingram L."/>
            <person name="Richardson P."/>
        </authorList>
    </citation>
    <scope>NUCLEOTIDE SEQUENCE [LARGE SCALE GENOMIC DNA]</scope>
    <source>
        <strain>ATCC 8739 / DSM 1576 / NBRC 3972 / NCIMB 8545 / WDCM 00012 / Crooks</strain>
    </source>
</reference>
<accession>B1J0T9</accession>
<evidence type="ECO:0000255" key="1">
    <source>
        <dbReference type="HAMAP-Rule" id="MF_00535"/>
    </source>
</evidence>
<sequence length="156" mass="17054">MIQSQINRNIRLDLADAILLSKAKKDLSFAEIADGTGLAEAFVTEALLGQQALPADAARLVGAKLDLDEDSILLLQMIPLRGCIDDRIPTDPTMYRFYEMLQVYGTTLKALVHEKFGDGIISAINFKLDVKKVADPEGGECAVITLDGKYLPTKPF</sequence>
<keyword id="KW-0456">Lyase</keyword>
<protein>
    <recommendedName>
        <fullName evidence="1">Cyanate hydratase</fullName>
        <shortName evidence="1">Cyanase</shortName>
        <ecNumber evidence="1">4.2.1.104</ecNumber>
    </recommendedName>
    <alternativeName>
        <fullName evidence="1">Cyanate hydrolase</fullName>
    </alternativeName>
    <alternativeName>
        <fullName evidence="1">Cyanate lyase</fullName>
    </alternativeName>
</protein>
<dbReference type="EC" id="4.2.1.104" evidence="1"/>
<dbReference type="EMBL" id="CP000946">
    <property type="protein sequence ID" value="ACA78907.1"/>
    <property type="molecule type" value="Genomic_DNA"/>
</dbReference>
<dbReference type="RefSeq" id="WP_000616249.1">
    <property type="nucleotide sequence ID" value="NC_010468.1"/>
</dbReference>
<dbReference type="SMR" id="B1J0T9"/>
<dbReference type="KEGG" id="ecl:EcolC_3285"/>
<dbReference type="HOGENOM" id="CLU_103452_1_1_6"/>
<dbReference type="GO" id="GO:0008824">
    <property type="term" value="F:cyanate hydratase activity"/>
    <property type="evidence" value="ECO:0007669"/>
    <property type="project" value="UniProtKB-UniRule"/>
</dbReference>
<dbReference type="GO" id="GO:0003677">
    <property type="term" value="F:DNA binding"/>
    <property type="evidence" value="ECO:0007669"/>
    <property type="project" value="InterPro"/>
</dbReference>
<dbReference type="GO" id="GO:0009439">
    <property type="term" value="P:cyanate metabolic process"/>
    <property type="evidence" value="ECO:0007669"/>
    <property type="project" value="UniProtKB-UniRule"/>
</dbReference>
<dbReference type="CDD" id="cd00559">
    <property type="entry name" value="Cyanase_C"/>
    <property type="match status" value="1"/>
</dbReference>
<dbReference type="FunFam" id="3.30.1160.10:FF:000001">
    <property type="entry name" value="Cyanate hydratase"/>
    <property type="match status" value="1"/>
</dbReference>
<dbReference type="Gene3D" id="3.30.1160.10">
    <property type="entry name" value="Cyanate lyase, C-terminal domain"/>
    <property type="match status" value="1"/>
</dbReference>
<dbReference type="Gene3D" id="1.10.260.40">
    <property type="entry name" value="lambda repressor-like DNA-binding domains"/>
    <property type="match status" value="1"/>
</dbReference>
<dbReference type="HAMAP" id="MF_00535">
    <property type="entry name" value="Cyanate_hydrat"/>
    <property type="match status" value="1"/>
</dbReference>
<dbReference type="InterPro" id="IPR008076">
    <property type="entry name" value="Cyanase"/>
</dbReference>
<dbReference type="InterPro" id="IPR003712">
    <property type="entry name" value="Cyanate_lyase_C"/>
</dbReference>
<dbReference type="InterPro" id="IPR036581">
    <property type="entry name" value="Cyanate_lyase_C_sf"/>
</dbReference>
<dbReference type="InterPro" id="IPR048564">
    <property type="entry name" value="CYNS_N"/>
</dbReference>
<dbReference type="InterPro" id="IPR010982">
    <property type="entry name" value="Lambda_DNA-bd_dom_sf"/>
</dbReference>
<dbReference type="NCBIfam" id="TIGR00673">
    <property type="entry name" value="cynS"/>
    <property type="match status" value="1"/>
</dbReference>
<dbReference type="NCBIfam" id="NF002773">
    <property type="entry name" value="PRK02866.1"/>
    <property type="match status" value="1"/>
</dbReference>
<dbReference type="PANTHER" id="PTHR34186">
    <property type="entry name" value="CYANATE HYDRATASE"/>
    <property type="match status" value="1"/>
</dbReference>
<dbReference type="PANTHER" id="PTHR34186:SF2">
    <property type="entry name" value="CYANATE HYDRATASE"/>
    <property type="match status" value="1"/>
</dbReference>
<dbReference type="Pfam" id="PF02560">
    <property type="entry name" value="Cyanate_lyase"/>
    <property type="match status" value="1"/>
</dbReference>
<dbReference type="Pfam" id="PF21291">
    <property type="entry name" value="CYNS_N"/>
    <property type="match status" value="1"/>
</dbReference>
<dbReference type="PIRSF" id="PIRSF001263">
    <property type="entry name" value="Cyanate_hydratas"/>
    <property type="match status" value="1"/>
</dbReference>
<dbReference type="PRINTS" id="PR01693">
    <property type="entry name" value="CYANASE"/>
</dbReference>
<dbReference type="SMART" id="SM01116">
    <property type="entry name" value="Cyanate_lyase"/>
    <property type="match status" value="1"/>
</dbReference>
<dbReference type="SUPFAM" id="SSF55234">
    <property type="entry name" value="Cyanase C-terminal domain"/>
    <property type="match status" value="1"/>
</dbReference>
<dbReference type="SUPFAM" id="SSF47413">
    <property type="entry name" value="lambda repressor-like DNA-binding domains"/>
    <property type="match status" value="1"/>
</dbReference>